<organism>
    <name type="scientific">Balaenoptera brydei</name>
    <name type="common">Bryde's whale</name>
    <name type="synonym">Balaenoptera edeni brydei</name>
    <dbReference type="NCBI Taxonomy" id="255365"/>
    <lineage>
        <taxon>Eukaryota</taxon>
        <taxon>Metazoa</taxon>
        <taxon>Chordata</taxon>
        <taxon>Craniata</taxon>
        <taxon>Vertebrata</taxon>
        <taxon>Euteleostomi</taxon>
        <taxon>Mammalia</taxon>
        <taxon>Eutheria</taxon>
        <taxon>Laurasiatheria</taxon>
        <taxon>Artiodactyla</taxon>
        <taxon>Whippomorpha</taxon>
        <taxon>Cetacea</taxon>
        <taxon>Mysticeti</taxon>
        <taxon>Balaenopteridae</taxon>
        <taxon>Balaenoptera</taxon>
    </lineage>
</organism>
<evidence type="ECO:0000250" key="1"/>
<evidence type="ECO:0000250" key="2">
    <source>
        <dbReference type="UniProtKB" id="P00157"/>
    </source>
</evidence>
<evidence type="ECO:0000255" key="3">
    <source>
        <dbReference type="PROSITE-ProRule" id="PRU00967"/>
    </source>
</evidence>
<evidence type="ECO:0000255" key="4">
    <source>
        <dbReference type="PROSITE-ProRule" id="PRU00968"/>
    </source>
</evidence>
<geneLocation type="mitochondrion"/>
<sequence>MTNIRKTHPLMKIVNDVFVDLPTPSNISSWWNFGSLLGLCLITQILTGLFLAMHYTPDTTTAFSSVAHICRDVNYGWVIRYLHANGASMFFICLYAHMGRGLYYGSYAFRETWNIGVILLFTVMATAFMGYVLPWGQMSFWGATVITNLLSAIPYIGTTLVEWIWGGFSVDKATLTRFFAFHFILPFIILALAMVHLIFLHETGSNNPTGIPSDMDKIPFHPYYTTKDILGALLLILTLLMLTLFVPDLLGDPDNYTPANPLSTPTHIKPEWYFLFAYAILRSIPNKLGGVLALLLSILILALIPMLHTSKQRSMMFRPFSQFLFWVLIADLLTLTWIGGQPVEHPYVIVGQFASILYFLLILVLMPVTSLIENKLMKW</sequence>
<feature type="chain" id="PRO_0000060660" description="Cytochrome b">
    <location>
        <begin position="1"/>
        <end position="379"/>
    </location>
</feature>
<feature type="transmembrane region" description="Helical" evidence="2">
    <location>
        <begin position="33"/>
        <end position="53"/>
    </location>
</feature>
<feature type="transmembrane region" description="Helical" evidence="2">
    <location>
        <begin position="77"/>
        <end position="98"/>
    </location>
</feature>
<feature type="transmembrane region" description="Helical" evidence="2">
    <location>
        <begin position="113"/>
        <end position="133"/>
    </location>
</feature>
<feature type="transmembrane region" description="Helical" evidence="2">
    <location>
        <begin position="178"/>
        <end position="198"/>
    </location>
</feature>
<feature type="transmembrane region" description="Helical" evidence="2">
    <location>
        <begin position="226"/>
        <end position="246"/>
    </location>
</feature>
<feature type="transmembrane region" description="Helical" evidence="2">
    <location>
        <begin position="288"/>
        <end position="308"/>
    </location>
</feature>
<feature type="transmembrane region" description="Helical" evidence="2">
    <location>
        <begin position="320"/>
        <end position="340"/>
    </location>
</feature>
<feature type="transmembrane region" description="Helical" evidence="2">
    <location>
        <begin position="347"/>
        <end position="367"/>
    </location>
</feature>
<feature type="binding site" description="axial binding residue" evidence="2">
    <location>
        <position position="83"/>
    </location>
    <ligand>
        <name>heme b</name>
        <dbReference type="ChEBI" id="CHEBI:60344"/>
        <label>b562</label>
    </ligand>
    <ligandPart>
        <name>Fe</name>
        <dbReference type="ChEBI" id="CHEBI:18248"/>
    </ligandPart>
</feature>
<feature type="binding site" description="axial binding residue" evidence="2">
    <location>
        <position position="97"/>
    </location>
    <ligand>
        <name>heme b</name>
        <dbReference type="ChEBI" id="CHEBI:60344"/>
        <label>b566</label>
    </ligand>
    <ligandPart>
        <name>Fe</name>
        <dbReference type="ChEBI" id="CHEBI:18248"/>
    </ligandPart>
</feature>
<feature type="binding site" description="axial binding residue" evidence="2">
    <location>
        <position position="182"/>
    </location>
    <ligand>
        <name>heme b</name>
        <dbReference type="ChEBI" id="CHEBI:60344"/>
        <label>b562</label>
    </ligand>
    <ligandPart>
        <name>Fe</name>
        <dbReference type="ChEBI" id="CHEBI:18248"/>
    </ligandPart>
</feature>
<feature type="binding site" description="axial binding residue" evidence="2">
    <location>
        <position position="196"/>
    </location>
    <ligand>
        <name>heme b</name>
        <dbReference type="ChEBI" id="CHEBI:60344"/>
        <label>b566</label>
    </ligand>
    <ligandPart>
        <name>Fe</name>
        <dbReference type="ChEBI" id="CHEBI:18248"/>
    </ligandPart>
</feature>
<feature type="binding site" evidence="2">
    <location>
        <position position="201"/>
    </location>
    <ligand>
        <name>a ubiquinone</name>
        <dbReference type="ChEBI" id="CHEBI:16389"/>
    </ligand>
</feature>
<dbReference type="EMBL" id="AP006469">
    <property type="protein sequence ID" value="BAD91719.1"/>
    <property type="molecule type" value="Genomic_DNA"/>
</dbReference>
<dbReference type="RefSeq" id="YP_220744.1">
    <property type="nucleotide sequence ID" value="NC_006928.1"/>
</dbReference>
<dbReference type="SMR" id="Q599A4"/>
<dbReference type="GeneID" id="3338320"/>
<dbReference type="CTD" id="4519"/>
<dbReference type="GO" id="GO:0005743">
    <property type="term" value="C:mitochondrial inner membrane"/>
    <property type="evidence" value="ECO:0007669"/>
    <property type="project" value="UniProtKB-SubCell"/>
</dbReference>
<dbReference type="GO" id="GO:0045275">
    <property type="term" value="C:respiratory chain complex III"/>
    <property type="evidence" value="ECO:0007669"/>
    <property type="project" value="InterPro"/>
</dbReference>
<dbReference type="GO" id="GO:0046872">
    <property type="term" value="F:metal ion binding"/>
    <property type="evidence" value="ECO:0007669"/>
    <property type="project" value="UniProtKB-KW"/>
</dbReference>
<dbReference type="GO" id="GO:0008121">
    <property type="term" value="F:ubiquinol-cytochrome-c reductase activity"/>
    <property type="evidence" value="ECO:0007669"/>
    <property type="project" value="InterPro"/>
</dbReference>
<dbReference type="GO" id="GO:0006122">
    <property type="term" value="P:mitochondrial electron transport, ubiquinol to cytochrome c"/>
    <property type="evidence" value="ECO:0007669"/>
    <property type="project" value="TreeGrafter"/>
</dbReference>
<dbReference type="CDD" id="cd00290">
    <property type="entry name" value="cytochrome_b_C"/>
    <property type="match status" value="1"/>
</dbReference>
<dbReference type="CDD" id="cd00284">
    <property type="entry name" value="Cytochrome_b_N"/>
    <property type="match status" value="1"/>
</dbReference>
<dbReference type="FunFam" id="1.20.810.10:FF:000002">
    <property type="entry name" value="Cytochrome b"/>
    <property type="match status" value="1"/>
</dbReference>
<dbReference type="Gene3D" id="1.20.810.10">
    <property type="entry name" value="Cytochrome Bc1 Complex, Chain C"/>
    <property type="match status" value="1"/>
</dbReference>
<dbReference type="InterPro" id="IPR005798">
    <property type="entry name" value="Cyt_b/b6_C"/>
</dbReference>
<dbReference type="InterPro" id="IPR036150">
    <property type="entry name" value="Cyt_b/b6_C_sf"/>
</dbReference>
<dbReference type="InterPro" id="IPR005797">
    <property type="entry name" value="Cyt_b/b6_N"/>
</dbReference>
<dbReference type="InterPro" id="IPR027387">
    <property type="entry name" value="Cytb/b6-like_sf"/>
</dbReference>
<dbReference type="InterPro" id="IPR030689">
    <property type="entry name" value="Cytochrome_b"/>
</dbReference>
<dbReference type="InterPro" id="IPR048260">
    <property type="entry name" value="Cytochrome_b_C_euk/bac"/>
</dbReference>
<dbReference type="InterPro" id="IPR048259">
    <property type="entry name" value="Cytochrome_b_N_euk/bac"/>
</dbReference>
<dbReference type="InterPro" id="IPR016174">
    <property type="entry name" value="Di-haem_cyt_TM"/>
</dbReference>
<dbReference type="PANTHER" id="PTHR19271">
    <property type="entry name" value="CYTOCHROME B"/>
    <property type="match status" value="1"/>
</dbReference>
<dbReference type="PANTHER" id="PTHR19271:SF16">
    <property type="entry name" value="CYTOCHROME B"/>
    <property type="match status" value="1"/>
</dbReference>
<dbReference type="Pfam" id="PF00032">
    <property type="entry name" value="Cytochrom_B_C"/>
    <property type="match status" value="1"/>
</dbReference>
<dbReference type="Pfam" id="PF00033">
    <property type="entry name" value="Cytochrome_B"/>
    <property type="match status" value="1"/>
</dbReference>
<dbReference type="PIRSF" id="PIRSF038885">
    <property type="entry name" value="COB"/>
    <property type="match status" value="1"/>
</dbReference>
<dbReference type="SUPFAM" id="SSF81648">
    <property type="entry name" value="a domain/subunit of cytochrome bc1 complex (Ubiquinol-cytochrome c reductase)"/>
    <property type="match status" value="1"/>
</dbReference>
<dbReference type="SUPFAM" id="SSF81342">
    <property type="entry name" value="Transmembrane di-heme cytochromes"/>
    <property type="match status" value="1"/>
</dbReference>
<dbReference type="PROSITE" id="PS51003">
    <property type="entry name" value="CYTB_CTER"/>
    <property type="match status" value="1"/>
</dbReference>
<dbReference type="PROSITE" id="PS51002">
    <property type="entry name" value="CYTB_NTER"/>
    <property type="match status" value="1"/>
</dbReference>
<proteinExistence type="inferred from homology"/>
<reference key="1">
    <citation type="journal article" date="2005" name="Syst. Biol.">
        <title>Mitochondrial phylogenetics and evolution of mysticete whales.</title>
        <authorList>
            <person name="Sasaki T."/>
            <person name="Nikaido M."/>
            <person name="Hamilton H."/>
            <person name="Goto M."/>
            <person name="Kato H."/>
            <person name="Kanda N."/>
            <person name="Pastene L.A."/>
            <person name="Cao Y."/>
            <person name="Fordyce R.E."/>
            <person name="Hasegawa M."/>
            <person name="Okada N."/>
        </authorList>
    </citation>
    <scope>NUCLEOTIDE SEQUENCE [GENOMIC DNA]</scope>
</reference>
<gene>
    <name type="primary">MT-CYB</name>
    <name type="synonym">COB</name>
    <name type="synonym">CYTB</name>
    <name type="synonym">MTCYB</name>
</gene>
<protein>
    <recommendedName>
        <fullName>Cytochrome b</fullName>
    </recommendedName>
    <alternativeName>
        <fullName>Complex III subunit 3</fullName>
    </alternativeName>
    <alternativeName>
        <fullName>Complex III subunit III</fullName>
    </alternativeName>
    <alternativeName>
        <fullName>Cytochrome b-c1 complex subunit 3</fullName>
    </alternativeName>
    <alternativeName>
        <fullName>Ubiquinol-cytochrome-c reductase complex cytochrome b subunit</fullName>
    </alternativeName>
</protein>
<accession>Q599A4</accession>
<keyword id="KW-0249">Electron transport</keyword>
<keyword id="KW-0349">Heme</keyword>
<keyword id="KW-0408">Iron</keyword>
<keyword id="KW-0472">Membrane</keyword>
<keyword id="KW-0479">Metal-binding</keyword>
<keyword id="KW-0496">Mitochondrion</keyword>
<keyword id="KW-0999">Mitochondrion inner membrane</keyword>
<keyword id="KW-0679">Respiratory chain</keyword>
<keyword id="KW-0812">Transmembrane</keyword>
<keyword id="KW-1133">Transmembrane helix</keyword>
<keyword id="KW-0813">Transport</keyword>
<keyword id="KW-0830">Ubiquinone</keyword>
<name>CYB_BALBR</name>
<comment type="function">
    <text evidence="2">Component of the ubiquinol-cytochrome c reductase complex (complex III or cytochrome b-c1 complex) that is part of the mitochondrial respiratory chain. The b-c1 complex mediates electron transfer from ubiquinol to cytochrome c. Contributes to the generation of a proton gradient across the mitochondrial membrane that is then used for ATP synthesis.</text>
</comment>
<comment type="cofactor">
    <cofactor evidence="2">
        <name>heme b</name>
        <dbReference type="ChEBI" id="CHEBI:60344"/>
    </cofactor>
    <text evidence="2">Binds 2 heme b groups non-covalently.</text>
</comment>
<comment type="subunit">
    <text evidence="2">The cytochrome bc1 complex contains 11 subunits: 3 respiratory subunits (MT-CYB, CYC1 and UQCRFS1), 2 core proteins (UQCRC1 and UQCRC2) and 6 low-molecular weight proteins (UQCRH/QCR6, UQCRB/QCR7, UQCRQ/QCR8, UQCR10/QCR9, UQCR11/QCR10 and a cleavage product of UQCRFS1). This cytochrome bc1 complex then forms a dimer.</text>
</comment>
<comment type="subcellular location">
    <subcellularLocation>
        <location evidence="2">Mitochondrion inner membrane</location>
        <topology evidence="2">Multi-pass membrane protein</topology>
    </subcellularLocation>
</comment>
<comment type="miscellaneous">
    <text evidence="1">Heme 1 (or BL or b562) is low-potential and absorbs at about 562 nm, and heme 2 (or BH or b566) is high-potential and absorbs at about 566 nm.</text>
</comment>
<comment type="similarity">
    <text evidence="3 4">Belongs to the cytochrome b family.</text>
</comment>
<comment type="caution">
    <text evidence="2">The full-length protein contains only eight transmembrane helices, not nine as predicted by bioinformatics tools.</text>
</comment>